<accession>O06992</accession>
<accession>Q795H1</accession>
<organism>
    <name type="scientific">Bacillus subtilis (strain 168)</name>
    <dbReference type="NCBI Taxonomy" id="224308"/>
    <lineage>
        <taxon>Bacteria</taxon>
        <taxon>Bacillati</taxon>
        <taxon>Bacillota</taxon>
        <taxon>Bacilli</taxon>
        <taxon>Bacillales</taxon>
        <taxon>Bacillaceae</taxon>
        <taxon>Bacillus</taxon>
    </lineage>
</organism>
<dbReference type="EMBL" id="Z94043">
    <property type="protein sequence ID" value="CAB08039.1"/>
    <property type="molecule type" value="Genomic_DNA"/>
</dbReference>
<dbReference type="EMBL" id="AL009126">
    <property type="protein sequence ID" value="CAB15463.1"/>
    <property type="molecule type" value="Genomic_DNA"/>
</dbReference>
<dbReference type="PIR" id="B70034">
    <property type="entry name" value="B70034"/>
</dbReference>
<dbReference type="RefSeq" id="WP_003243870.1">
    <property type="nucleotide sequence ID" value="NZ_OZ025638.1"/>
</dbReference>
<dbReference type="FunCoup" id="O06992">
    <property type="interactions" value="17"/>
</dbReference>
<dbReference type="STRING" id="224308.BSU34580"/>
<dbReference type="PaxDb" id="224308-BSU34580"/>
<dbReference type="EnsemblBacteria" id="CAB15463">
    <property type="protein sequence ID" value="CAB15463"/>
    <property type="gene ID" value="BSU_34580"/>
</dbReference>
<dbReference type="GeneID" id="936479"/>
<dbReference type="KEGG" id="bsu:BSU34580"/>
<dbReference type="PATRIC" id="fig|224308.179.peg.3745"/>
<dbReference type="eggNOG" id="COG5521">
    <property type="taxonomic scope" value="Bacteria"/>
</dbReference>
<dbReference type="InParanoid" id="O06992"/>
<dbReference type="OrthoDB" id="2287686at2"/>
<dbReference type="BioCyc" id="BSUB:BSU34580-MONOMER"/>
<dbReference type="Proteomes" id="UP000001570">
    <property type="component" value="Chromosome"/>
</dbReference>
<dbReference type="GO" id="GO:0005886">
    <property type="term" value="C:plasma membrane"/>
    <property type="evidence" value="ECO:0007669"/>
    <property type="project" value="UniProtKB-SubCell"/>
</dbReference>
<dbReference type="InterPro" id="IPR009574">
    <property type="entry name" value="DUF1189"/>
</dbReference>
<dbReference type="Pfam" id="PF06691">
    <property type="entry name" value="DUF1189"/>
    <property type="match status" value="1"/>
</dbReference>
<name>MALA_BACSU</name>
<sequence>MKNLENKSFIIRCLKAAASPSGVCRYGNTFSWLQLSFLFLFLTACLMAPLAVSFVKMDRFSVSSFMPSAIQGVNDQFADQLQGFQIRNGKLTGGKSSERIEDGQNVMAVDMKHEYETSGENGRLKVTGFENAIIFQPDQLVITDQNETGFSVGYAKMDVKLEKPNVHDVEVLIDTLWLAQYKPMIMMLAYTVVSMIQLLLTFVLAGGLWITKISNMVSIASFKEAASIAICASALPAFAAAAIGMVHFDLITVLMIHSCGVTLMISFAFRYLTKTRRDNGNLHSGGNDDKSAVI</sequence>
<protein>
    <recommendedName>
        <fullName>Putative maltodextrin utilization protein YvdJ</fullName>
    </recommendedName>
</protein>
<proteinExistence type="predicted"/>
<evidence type="ECO:0000255" key="1"/>
<evidence type="ECO:0000305" key="2"/>
<feature type="chain" id="PRO_0000361674" description="Putative maltodextrin utilization protein YvdJ">
    <location>
        <begin position="1"/>
        <end position="294"/>
    </location>
</feature>
<feature type="transmembrane region" description="Helical" evidence="1">
    <location>
        <begin position="35"/>
        <end position="55"/>
    </location>
</feature>
<feature type="transmembrane region" description="Helical" evidence="1">
    <location>
        <begin position="184"/>
        <end position="204"/>
    </location>
</feature>
<feature type="transmembrane region" description="Helical" evidence="1">
    <location>
        <begin position="228"/>
        <end position="248"/>
    </location>
</feature>
<feature type="transmembrane region" description="Helical" evidence="1">
    <location>
        <begin position="249"/>
        <end position="269"/>
    </location>
</feature>
<keyword id="KW-1003">Cell membrane</keyword>
<keyword id="KW-0472">Membrane</keyword>
<keyword id="KW-1185">Reference proteome</keyword>
<keyword id="KW-0812">Transmembrane</keyword>
<keyword id="KW-1133">Transmembrane helix</keyword>
<gene>
    <name type="primary">yvdJ</name>
    <name type="ordered locus">BSU34580</name>
</gene>
<reference key="1">
    <citation type="submission" date="1997-04" db="EMBL/GenBank/DDBJ databases">
        <authorList>
            <person name="Denizot F."/>
        </authorList>
    </citation>
    <scope>NUCLEOTIDE SEQUENCE [GENOMIC DNA]</scope>
</reference>
<reference key="2">
    <citation type="journal article" date="1997" name="Nature">
        <title>The complete genome sequence of the Gram-positive bacterium Bacillus subtilis.</title>
        <authorList>
            <person name="Kunst F."/>
            <person name="Ogasawara N."/>
            <person name="Moszer I."/>
            <person name="Albertini A.M."/>
            <person name="Alloni G."/>
            <person name="Azevedo V."/>
            <person name="Bertero M.G."/>
            <person name="Bessieres P."/>
            <person name="Bolotin A."/>
            <person name="Borchert S."/>
            <person name="Borriss R."/>
            <person name="Boursier L."/>
            <person name="Brans A."/>
            <person name="Braun M."/>
            <person name="Brignell S.C."/>
            <person name="Bron S."/>
            <person name="Brouillet S."/>
            <person name="Bruschi C.V."/>
            <person name="Caldwell B."/>
            <person name="Capuano V."/>
            <person name="Carter N.M."/>
            <person name="Choi S.-K."/>
            <person name="Codani J.-J."/>
            <person name="Connerton I.F."/>
            <person name="Cummings N.J."/>
            <person name="Daniel R.A."/>
            <person name="Denizot F."/>
            <person name="Devine K.M."/>
            <person name="Duesterhoeft A."/>
            <person name="Ehrlich S.D."/>
            <person name="Emmerson P.T."/>
            <person name="Entian K.-D."/>
            <person name="Errington J."/>
            <person name="Fabret C."/>
            <person name="Ferrari E."/>
            <person name="Foulger D."/>
            <person name="Fritz C."/>
            <person name="Fujita M."/>
            <person name="Fujita Y."/>
            <person name="Fuma S."/>
            <person name="Galizzi A."/>
            <person name="Galleron N."/>
            <person name="Ghim S.-Y."/>
            <person name="Glaser P."/>
            <person name="Goffeau A."/>
            <person name="Golightly E.J."/>
            <person name="Grandi G."/>
            <person name="Guiseppi G."/>
            <person name="Guy B.J."/>
            <person name="Haga K."/>
            <person name="Haiech J."/>
            <person name="Harwood C.R."/>
            <person name="Henaut A."/>
            <person name="Hilbert H."/>
            <person name="Holsappel S."/>
            <person name="Hosono S."/>
            <person name="Hullo M.-F."/>
            <person name="Itaya M."/>
            <person name="Jones L.-M."/>
            <person name="Joris B."/>
            <person name="Karamata D."/>
            <person name="Kasahara Y."/>
            <person name="Klaerr-Blanchard M."/>
            <person name="Klein C."/>
            <person name="Kobayashi Y."/>
            <person name="Koetter P."/>
            <person name="Koningstein G."/>
            <person name="Krogh S."/>
            <person name="Kumano M."/>
            <person name="Kurita K."/>
            <person name="Lapidus A."/>
            <person name="Lardinois S."/>
            <person name="Lauber J."/>
            <person name="Lazarevic V."/>
            <person name="Lee S.-M."/>
            <person name="Levine A."/>
            <person name="Liu H."/>
            <person name="Masuda S."/>
            <person name="Mauel C."/>
            <person name="Medigue C."/>
            <person name="Medina N."/>
            <person name="Mellado R.P."/>
            <person name="Mizuno M."/>
            <person name="Moestl D."/>
            <person name="Nakai S."/>
            <person name="Noback M."/>
            <person name="Noone D."/>
            <person name="O'Reilly M."/>
            <person name="Ogawa K."/>
            <person name="Ogiwara A."/>
            <person name="Oudega B."/>
            <person name="Park S.-H."/>
            <person name="Parro V."/>
            <person name="Pohl T.M."/>
            <person name="Portetelle D."/>
            <person name="Porwollik S."/>
            <person name="Prescott A.M."/>
            <person name="Presecan E."/>
            <person name="Pujic P."/>
            <person name="Purnelle B."/>
            <person name="Rapoport G."/>
            <person name="Rey M."/>
            <person name="Reynolds S."/>
            <person name="Rieger M."/>
            <person name="Rivolta C."/>
            <person name="Rocha E."/>
            <person name="Roche B."/>
            <person name="Rose M."/>
            <person name="Sadaie Y."/>
            <person name="Sato T."/>
            <person name="Scanlan E."/>
            <person name="Schleich S."/>
            <person name="Schroeter R."/>
            <person name="Scoffone F."/>
            <person name="Sekiguchi J."/>
            <person name="Sekowska A."/>
            <person name="Seror S.J."/>
            <person name="Serror P."/>
            <person name="Shin B.-S."/>
            <person name="Soldo B."/>
            <person name="Sorokin A."/>
            <person name="Tacconi E."/>
            <person name="Takagi T."/>
            <person name="Takahashi H."/>
            <person name="Takemaru K."/>
            <person name="Takeuchi M."/>
            <person name="Tamakoshi A."/>
            <person name="Tanaka T."/>
            <person name="Terpstra P."/>
            <person name="Tognoni A."/>
            <person name="Tosato V."/>
            <person name="Uchiyama S."/>
            <person name="Vandenbol M."/>
            <person name="Vannier F."/>
            <person name="Vassarotti A."/>
            <person name="Viari A."/>
            <person name="Wambutt R."/>
            <person name="Wedler E."/>
            <person name="Wedler H."/>
            <person name="Weitzenegger T."/>
            <person name="Winters P."/>
            <person name="Wipat A."/>
            <person name="Yamamoto H."/>
            <person name="Yamane K."/>
            <person name="Yasumoto K."/>
            <person name="Yata K."/>
            <person name="Yoshida K."/>
            <person name="Yoshikawa H.-F."/>
            <person name="Zumstein E."/>
            <person name="Yoshikawa H."/>
            <person name="Danchin A."/>
        </authorList>
    </citation>
    <scope>NUCLEOTIDE SEQUENCE [LARGE SCALE GENOMIC DNA]</scope>
    <source>
        <strain>168</strain>
    </source>
</reference>
<reference key="3">
    <citation type="journal article" date="2006" name="J. Bacteriol.">
        <title>Maltose and maltodextrin utilization by Bacillus subtilis.</title>
        <authorList>
            <person name="Schoenert S."/>
            <person name="Seitz S."/>
            <person name="Krafft H."/>
            <person name="Feuerbaum E.-A."/>
            <person name="Andernach I."/>
            <person name="Witz G."/>
            <person name="Dahl M.K."/>
        </authorList>
    </citation>
    <scope>PUTATIVE FUNCTION</scope>
</reference>
<comment type="function">
    <text>Could have a role in maltodextrin utilization.</text>
</comment>
<comment type="subcellular location">
    <subcellularLocation>
        <location evidence="2">Cell membrane</location>
        <topology evidence="2">Multi-pass membrane protein</topology>
    </subcellularLocation>
</comment>